<evidence type="ECO:0000256" key="1">
    <source>
        <dbReference type="SAM" id="MobiDB-lite"/>
    </source>
</evidence>
<evidence type="ECO:0000269" key="2">
    <source>
    </source>
</evidence>
<evidence type="ECO:0000269" key="3">
    <source>
    </source>
</evidence>
<evidence type="ECO:0000303" key="4">
    <source>
    </source>
</evidence>
<evidence type="ECO:0000303" key="5">
    <source>
    </source>
</evidence>
<evidence type="ECO:0000305" key="6"/>
<evidence type="ECO:0000312" key="7">
    <source>
        <dbReference type="HGNC" id="HGNC:10561"/>
    </source>
</evidence>
<dbReference type="EMBL" id="AF126749">
    <property type="status" value="NOT_ANNOTATED_CDS"/>
    <property type="molecule type" value="mRNA"/>
</dbReference>
<dbReference type="EMBL" id="AL160391">
    <property type="status" value="NOT_ANNOTATED_CDS"/>
    <property type="molecule type" value="Genomic_DNA"/>
</dbReference>
<dbReference type="FunCoup" id="P0DMR3">
    <property type="interactions" value="430"/>
</dbReference>
<dbReference type="GlyGen" id="P0DMR3">
    <property type="glycosylation" value="1 site, 1 O-linked glycan (1 site)"/>
</dbReference>
<dbReference type="iPTMnet" id="P0DMR3"/>
<dbReference type="BioMuta" id="HGNC:10561"/>
<dbReference type="AGR" id="HGNC:10561"/>
<dbReference type="GeneCards" id="ATXN8OS"/>
<dbReference type="HGNC" id="HGNC:10561">
    <property type="gene designation" value="ATXN8OS"/>
</dbReference>
<dbReference type="MalaCards" id="ATXN8OS"/>
<dbReference type="MIM" id="603680">
    <property type="type" value="gene"/>
</dbReference>
<dbReference type="neXtProt" id="NX_P0DMR3"/>
<dbReference type="Orphanet" id="98760">
    <property type="disease" value="Spinocerebellar ataxia type 8"/>
</dbReference>
<dbReference type="InParanoid" id="P0DMR3"/>
<dbReference type="PAN-GO" id="P0DMR3">
    <property type="GO annotations" value="0 GO annotations based on evolutionary models"/>
</dbReference>
<dbReference type="Pharos" id="P0DMR3">
    <property type="development level" value="Tdark"/>
</dbReference>
<dbReference type="Proteomes" id="UP000005640">
    <property type="component" value="Unplaced"/>
</dbReference>
<dbReference type="RNAct" id="P0DMR3">
    <property type="molecule type" value="protein"/>
</dbReference>
<dbReference type="GO" id="GO:0005737">
    <property type="term" value="C:cytoplasm"/>
    <property type="evidence" value="ECO:0000314"/>
    <property type="project" value="UniProtKB"/>
</dbReference>
<protein>
    <recommendedName>
        <fullName evidence="6">Putative protein ATXN8OS</fullName>
    </recommendedName>
    <alternativeName>
        <fullName evidence="7">ATXN8 opposite strand</fullName>
    </alternativeName>
    <alternativeName>
        <fullName evidence="4">Spinocerebellar ataxia 8</fullName>
    </alternativeName>
    <alternativeName>
        <fullName evidence="7">kelch-like 1 antisense</fullName>
    </alternativeName>
</protein>
<comment type="subcellular location">
    <subcellularLocation>
        <location evidence="3">Cytoplasm</location>
    </subcellularLocation>
</comment>
<comment type="tissue specificity">
    <text evidence="2 3">Expressed in brain (PubMed:10192387). Expressed in muscle tissues (at protein level).</text>
</comment>
<comment type="caution">
    <text evidence="4 5">Product of a dubious CDS prediction. Translation must be initiated from a non-canonical GUG codon (PubMed:24040107). Overlaps with the ATXN8 gene but is transcribed in the opposite strand and was originally considered as non-protein coding (PubMed:10192387).</text>
</comment>
<organism>
    <name type="scientific">Homo sapiens</name>
    <name type="common">Human</name>
    <dbReference type="NCBI Taxonomy" id="9606"/>
    <lineage>
        <taxon>Eukaryota</taxon>
        <taxon>Metazoa</taxon>
        <taxon>Chordata</taxon>
        <taxon>Craniata</taxon>
        <taxon>Vertebrata</taxon>
        <taxon>Euteleostomi</taxon>
        <taxon>Mammalia</taxon>
        <taxon>Eutheria</taxon>
        <taxon>Euarchontoglires</taxon>
        <taxon>Primates</taxon>
        <taxon>Haplorrhini</taxon>
        <taxon>Catarrhini</taxon>
        <taxon>Hominidae</taxon>
        <taxon>Homo</taxon>
    </lineage>
</organism>
<proteinExistence type="uncertain"/>
<accession>P0DMR3</accession>
<gene>
    <name evidence="7" type="primary">ATXN8OS</name>
    <name evidence="7" type="synonym">KLHL1AS</name>
    <name evidence="4" type="synonym">SCA8</name>
</gene>
<keyword id="KW-0963">Cytoplasm</keyword>
<keyword id="KW-1185">Reference proteome</keyword>
<reference key="1">
    <citation type="journal article" date="1999" name="Nat. Genet.">
        <title>An untranslated CTG expansion causes a novel form of spinocerebellar ataxia (SCA8).</title>
        <authorList>
            <person name="Koob M.D."/>
            <person name="Moseley M.L."/>
            <person name="Schut L.J."/>
            <person name="Benzow K.A."/>
            <person name="Bird T.D."/>
            <person name="Day J.W."/>
            <person name="Ranum L.P."/>
        </authorList>
    </citation>
    <scope>NUCLEOTIDE SEQUENCE [MRNA]</scope>
    <scope>IDENTIFICATION</scope>
    <scope>TISSUE SPECIFICITY</scope>
</reference>
<reference key="2">
    <citation type="journal article" date="2004" name="Nature">
        <title>The DNA sequence and analysis of human chromosome 13.</title>
        <authorList>
            <person name="Dunham A."/>
            <person name="Matthews L.H."/>
            <person name="Burton J."/>
            <person name="Ashurst J.L."/>
            <person name="Howe K.L."/>
            <person name="Ashcroft K.J."/>
            <person name="Beare D.M."/>
            <person name="Burford D.C."/>
            <person name="Hunt S.E."/>
            <person name="Griffiths-Jones S."/>
            <person name="Jones M.C."/>
            <person name="Keenan S.J."/>
            <person name="Oliver K."/>
            <person name="Scott C.E."/>
            <person name="Ainscough R."/>
            <person name="Almeida J.P."/>
            <person name="Ambrose K.D."/>
            <person name="Andrews D.T."/>
            <person name="Ashwell R.I.S."/>
            <person name="Babbage A.K."/>
            <person name="Bagguley C.L."/>
            <person name="Bailey J."/>
            <person name="Bannerjee R."/>
            <person name="Barlow K.F."/>
            <person name="Bates K."/>
            <person name="Beasley H."/>
            <person name="Bird C.P."/>
            <person name="Bray-Allen S."/>
            <person name="Brown A.J."/>
            <person name="Brown J.Y."/>
            <person name="Burrill W."/>
            <person name="Carder C."/>
            <person name="Carter N.P."/>
            <person name="Chapman J.C."/>
            <person name="Clamp M.E."/>
            <person name="Clark S.Y."/>
            <person name="Clarke G."/>
            <person name="Clee C.M."/>
            <person name="Clegg S.C."/>
            <person name="Cobley V."/>
            <person name="Collins J.E."/>
            <person name="Corby N."/>
            <person name="Coville G.J."/>
            <person name="Deloukas P."/>
            <person name="Dhami P."/>
            <person name="Dunham I."/>
            <person name="Dunn M."/>
            <person name="Earthrowl M.E."/>
            <person name="Ellington A.G."/>
            <person name="Faulkner L."/>
            <person name="Frankish A.G."/>
            <person name="Frankland J."/>
            <person name="French L."/>
            <person name="Garner P."/>
            <person name="Garnett J."/>
            <person name="Gilbert J.G.R."/>
            <person name="Gilson C.J."/>
            <person name="Ghori J."/>
            <person name="Grafham D.V."/>
            <person name="Gribble S.M."/>
            <person name="Griffiths C."/>
            <person name="Hall R.E."/>
            <person name="Hammond S."/>
            <person name="Harley J.L."/>
            <person name="Hart E.A."/>
            <person name="Heath P.D."/>
            <person name="Howden P.J."/>
            <person name="Huckle E.J."/>
            <person name="Hunt P.J."/>
            <person name="Hunt A.R."/>
            <person name="Johnson C."/>
            <person name="Johnson D."/>
            <person name="Kay M."/>
            <person name="Kimberley A.M."/>
            <person name="King A."/>
            <person name="Laird G.K."/>
            <person name="Langford C.J."/>
            <person name="Lawlor S."/>
            <person name="Leongamornlert D.A."/>
            <person name="Lloyd D.M."/>
            <person name="Lloyd C."/>
            <person name="Loveland J.E."/>
            <person name="Lovell J."/>
            <person name="Martin S."/>
            <person name="Mashreghi-Mohammadi M."/>
            <person name="McLaren S.J."/>
            <person name="McMurray A."/>
            <person name="Milne S."/>
            <person name="Moore M.J.F."/>
            <person name="Nickerson T."/>
            <person name="Palmer S.A."/>
            <person name="Pearce A.V."/>
            <person name="Peck A.I."/>
            <person name="Pelan S."/>
            <person name="Phillimore B."/>
            <person name="Porter K.M."/>
            <person name="Rice C.M."/>
            <person name="Searle S."/>
            <person name="Sehra H.K."/>
            <person name="Shownkeen R."/>
            <person name="Skuce C.D."/>
            <person name="Smith M."/>
            <person name="Steward C.A."/>
            <person name="Sycamore N."/>
            <person name="Tester J."/>
            <person name="Thomas D.W."/>
            <person name="Tracey A."/>
            <person name="Tromans A."/>
            <person name="Tubby B."/>
            <person name="Wall M."/>
            <person name="Wallis J.M."/>
            <person name="West A.P."/>
            <person name="Whitehead S.L."/>
            <person name="Willey D.L."/>
            <person name="Wilming L."/>
            <person name="Wray P.W."/>
            <person name="Wright M.W."/>
            <person name="Young L."/>
            <person name="Coulson A."/>
            <person name="Durbin R.M."/>
            <person name="Hubbard T."/>
            <person name="Sulston J.E."/>
            <person name="Beck S."/>
            <person name="Bentley D.R."/>
            <person name="Rogers J."/>
            <person name="Ross M.T."/>
        </authorList>
    </citation>
    <scope>NUCLEOTIDE SEQUENCE [LARGE SCALE GENOMIC DNA]</scope>
</reference>
<reference key="3">
    <citation type="journal article" date="2013" name="PLoS ONE">
        <title>Internal ribosome entry segment activity of ATXN8 opposite strand RNA.</title>
        <authorList>
            <person name="Chen I.C."/>
            <person name="Lin H.Y."/>
            <person name="Hsiao Y.C."/>
            <person name="Chen C.M."/>
            <person name="Wu Y.R."/>
            <person name="Shiau H.C."/>
            <person name="Shen Y.F."/>
            <person name="Huang K.S."/>
            <person name="Su M.T."/>
            <person name="Hsieh-Li H.M."/>
            <person name="Lee-Chen G.J."/>
        </authorList>
    </citation>
    <scope>IDENTIFICATION BY MASS SPECTROMETRY</scope>
    <scope>SUBCELLULAR LOCATION</scope>
    <scope>TISSUE SPECIFICITY</scope>
</reference>
<sequence length="200" mass="22759">MPCPGAPCCSLVATGSRVPFSGLKEEEEEDGEDDEEEEEEGFFQKVLTPLLSWLLSRRLWLGPQCSKLPLPSCCRQPPPAGPPVEGDGWLKSFQRSRRMCFTSKSFRPEPDMLYAQKAKGWQLTQDSGGWEVQDQCTRIWSKENLLALNTHSRRQKGKRENKVCVSTWQKSRGDRTYSSMATTPSMTKILEGCMYRKLKC</sequence>
<name>AT8OS_HUMAN</name>
<feature type="chain" id="PRO_0000431587" description="Putative protein ATXN8OS">
    <location>
        <begin position="1"/>
        <end position="200"/>
    </location>
</feature>
<feature type="region of interest" description="Disordered" evidence="1">
    <location>
        <begin position="19"/>
        <end position="39"/>
    </location>
</feature>
<feature type="compositionally biased region" description="Acidic residues" evidence="1">
    <location>
        <begin position="25"/>
        <end position="39"/>
    </location>
</feature>
<feature type="sequence conflict" description="In Ref. 1; AF126749." evidence="6" ref="1">
    <original>D</original>
    <variation>G</variation>
    <location>
        <position position="126"/>
    </location>
</feature>